<keyword id="KW-0011">Acute phase</keyword>
<keyword id="KW-0025">Alternative splicing</keyword>
<keyword id="KW-0130">Cell adhesion</keyword>
<keyword id="KW-0133">Cell shape</keyword>
<keyword id="KW-1015">Disulfide bond</keyword>
<keyword id="KW-0238">DNA-binding</keyword>
<keyword id="KW-0272">Extracellular matrix</keyword>
<keyword id="KW-0325">Glycoprotein</keyword>
<keyword id="KW-0358">Heparin-binding</keyword>
<keyword id="KW-0597">Phosphoprotein</keyword>
<keyword id="KW-0873">Pyrrolidone carboxylic acid</keyword>
<keyword id="KW-1185">Reference proteome</keyword>
<keyword id="KW-0677">Repeat</keyword>
<keyword id="KW-0964">Secreted</keyword>
<keyword id="KW-0732">Signal</keyword>
<keyword id="KW-0765">Sulfation</keyword>
<name>FINC_CHICK</name>
<protein>
    <recommendedName>
        <fullName evidence="2">Fibronectin</fullName>
        <shortName>FN</shortName>
    </recommendedName>
</protein>
<evidence type="ECO:0000250" key="1"/>
<evidence type="ECO:0000250" key="2">
    <source>
        <dbReference type="UniProtKB" id="P02751"/>
    </source>
</evidence>
<evidence type="ECO:0000250" key="3">
    <source>
        <dbReference type="UniProtKB" id="P11276"/>
    </source>
</evidence>
<evidence type="ECO:0000255" key="4"/>
<evidence type="ECO:0000255" key="5">
    <source>
        <dbReference type="PROSITE-ProRule" id="PRU00316"/>
    </source>
</evidence>
<evidence type="ECO:0000255" key="6">
    <source>
        <dbReference type="PROSITE-ProRule" id="PRU00478"/>
    </source>
</evidence>
<evidence type="ECO:0000255" key="7">
    <source>
        <dbReference type="PROSITE-ProRule" id="PRU00479"/>
    </source>
</evidence>
<evidence type="ECO:0000255" key="8">
    <source>
        <dbReference type="PROSITE-ProRule" id="PRU00498"/>
    </source>
</evidence>
<evidence type="ECO:0000256" key="9">
    <source>
        <dbReference type="SAM" id="MobiDB-lite"/>
    </source>
</evidence>
<evidence type="ECO:0000305" key="10"/>
<proteinExistence type="evidence at transcript level"/>
<sequence length="2483" mass="273248">MPGRGGLRLALLALCLGAAAAGGGDGQRRGGKNRRQAQTASVPQATPAQGKQTCFDNGRYYQINQQWERIYLGNTLVCTCYGGSRGFNCESKPEPEETCFDKYTGSTYRVGETYERPKDSMIWDCTCIGAGRGRISCTIANRCHEGGKSYKIGDTWRRPHETGGYLLECVCLGNGKGEWTCKPLAERCYDNTAGTSYVVGETWEKPYQGWMMVDCTCLGEGSGRITCTSRNRCNDQDTKTSYRIGDTWSKKDNRGNLLQCICTGNGRGEWKCERHTSLHTTSTGSGSPSFTNVQTALYQPQPQQPQPQPHGHCVTDNGVVYSLGMQWLKTQGSQQMLCTCLGNGVSCQEIAVTQTYGGNSDGEACVLPFTYNGRTFYSCTTEGRTDGHLWCSTTSNFEQDRRYSFCTEQNVLVQTRGGNSNGALCHFPFLYNNRNYTDCTSEGRRDNMKWCGTTENYDADQKFGFCPMAAHEEICTTNDGIMYRVGDQWDKQHDMGHMMRCTCVGNGRGEWTCIAYSQLRDQCIVDGITYDVNQTFHKRHDEGHMLNCTCFGQGRGRWKCDPVDQCQDSETRTFYQIGDSWEKYVHGVRYQCYCYGRGIGEWHCQPLQAYAGATGPVQVIITESTNQPNSHPIQWNAPKTSHISKYILRWRPKISGRHWKEATIPGHLNSYTISGLKPGVVYEGQLISVQQHGPKEVTRFDFTTTSTTAVTSNTVSGETTLLPPMVATSESVTEITASSFVVSWVSASDTVSGFRVEYELSEEGDEPQYLDLPSTATSVNIPDLLPGRKYIVNVYQISEEGEQNLILSTSQTTAPDAPPEHSVESVDDTSIVISWSRPQAPITGYRIVYTPSVEGSSTELNLPDTATSVTLSDLMPGVQYNISIYAVEEHQESTPVFIQQETTGVPRTDEVPSPKDLQFVEVSDVKVTIMWTPPQSQVSGYRVEAIPVNRPGQHGQRLPITRSSFAEVVDLLPGTTYLFKIFAVSHGRESKPLTGEQTTKLDAPTNLRFINTTEHSVLVLWTRPRAIISGYRLTAGPTRGGQPRTYNVGPSATKYLLRNLQPGTEYTVYLVAVKEDLQSARETGVFTTYQPVGSVPPFNTEVTETSIVITWTPAPRIGFKLGVRPSQGGEAPREVISDSGSIVISGLTPGVEYTYSLTVLMDGQERETPIIRRVTTPLSPPTNLRLEPNPDTGILIVSWDRSTTPGISGYRVTTAPTNGQQGSTLEEVVGADQTSCTFENLNPGVEYNVSVYAVKDDQESIPISKTITQEVPQLTDLSFVDITDSSIGLRWTPLNASTIIGYRITVVAAGESVPIFEDFVDSSVGYYTVTGLEPGIDYDISVITLINGGESAPTTLTQQTAVPPPTDLRFTNVGPDTMRVTWTAPTSIVLSSFLVRYSPVKKEEDVAELTISPSDNVVVLTNLLPGTEYLVRVYSVAEQHESAPLSGIQKTGLDSPTGLDFSDITANSFTVHWIAPRATITGYKIRHHPEHGVGRPKEDRVPPSRNSITLTNLLPGTEYVVSIIAVNGREESVPLVGQQTTVSDVPRDLEVNPTSPTSLEISWDAPAVTVRYYRITYGETGGSSPVQEFTVPGTMSRATITGLKPGVDYTITVYAVTGRGDSPASSKPVTVTYKTEIDTPSQMQVTDVQDNSISIRWLPSSSPVTGYRVTAVPKKGHGPTKTKNVPPDQTQVTIEGLQPTVEYMVSVYAQNQNGESLPLVETAVTNIDRPKGLTFTEVDVDSIKIAWESPQGQVTRYRVTYSSPEDGIHELLPAPGGEEDTAELHGLRPGSEYTINIVAIYDDMESLPLTGTQSTAIPPPTNLKFTQVTPTSLTVNWNAPNVRLTGYRVRVNPKEKTGPMKEINLSPDSTSAVVSGLMVATKYEVSVYALKDSLTSRPAQGVVTTLENVSPPRRARVTDATETTITITWRTKTETITGFQIDAIPAASGQNPIQRTISPDVRTYTITGLQPGNDYKIYLYTLNENARSSPVVIDASTAIDAPSNLRFLTTTTNSLLASWQPPRAKITGYIIRYDKPGSPAKELLPRPRPGTTEATITGLEPGTEYTIYIIAVKNNQKSEPLVGRKRTDDLPTLITGPHPNQPDMLDVPSVDEGTPYLTNNRYDNGNGIQLPGTSGHPQTIGHQGQQVFFEEHGYRRPVPTTATPLRPGSRRQPPNVDEAIEIPGYQVPIIVVPSYPHSREPRRNDTTGQEALSQTTISWRPLLESTEYIISCQPVSQDEDTLQFRVPGTSSSATLTGLTRGATYNIIVEALKDHRRQKVLEEVVTVGNTVSEGLNQPADDTCYDTYTGSFYSIGEEWERLSETGFKLWCQCLGFGSGHFRCDSSKWCHDNGVNYKIGEKWDRQGENGQMMSCTCLGNGKGEFKCEPHETTCYDDGKMYQVGEQWQKEYFGAICSCTCYGGQQGWRCDNCRRPSVEVAPEGSAGHTYPQFTQRYHQATNTNVNCPIECFMPLDVQADTQHPRGK</sequence>
<feature type="signal peptide" evidence="4">
    <location>
        <begin position="1"/>
        <end position="21"/>
    </location>
</feature>
<feature type="chain" id="PRO_0000158529" description="Fibronectin" evidence="4">
    <location>
        <begin position="22"/>
        <end position="2483"/>
    </location>
</feature>
<feature type="domain" description="Fibronectin type-I 1" evidence="6">
    <location>
        <begin position="52"/>
        <end position="92"/>
    </location>
</feature>
<feature type="domain" description="Fibronectin type-I 2" evidence="6">
    <location>
        <begin position="97"/>
        <end position="140"/>
    </location>
</feature>
<feature type="domain" description="Fibronectin type-I 3" evidence="6">
    <location>
        <begin position="141"/>
        <end position="184"/>
    </location>
</feature>
<feature type="domain" description="Fibronectin type-I 4" evidence="6">
    <location>
        <begin position="186"/>
        <end position="230"/>
    </location>
</feature>
<feature type="domain" description="Fibronectin type-I 5" evidence="6">
    <location>
        <begin position="231"/>
        <end position="275"/>
    </location>
</feature>
<feature type="domain" description="Fibronectin type-I 6" evidence="6">
    <location>
        <begin position="311"/>
        <end position="350"/>
    </location>
</feature>
<feature type="domain" description="Fibronectin type-II 1" evidence="7">
    <location>
        <begin position="360"/>
        <end position="408"/>
    </location>
</feature>
<feature type="domain" description="Fibronectin type-II 2" evidence="7">
    <location>
        <begin position="420"/>
        <end position="468"/>
    </location>
</feature>
<feature type="domain" description="Fibronectin type-I 7" evidence="6">
    <location>
        <begin position="473"/>
        <end position="516"/>
    </location>
</feature>
<feature type="domain" description="Fibronectin type-I 8" evidence="6">
    <location>
        <begin position="521"/>
        <end position="563"/>
    </location>
</feature>
<feature type="domain" description="Fibronectin type-I 9" evidence="6">
    <location>
        <begin position="564"/>
        <end position="607"/>
    </location>
</feature>
<feature type="domain" description="Fibronectin type-III 1" evidence="5">
    <location>
        <begin position="615"/>
        <end position="708"/>
    </location>
</feature>
<feature type="domain" description="Fibronectin type-III 2" evidence="5">
    <location>
        <begin position="723"/>
        <end position="812"/>
    </location>
</feature>
<feature type="domain" description="Fibronectin type-III 3" evidence="5">
    <location>
        <begin position="815"/>
        <end position="906"/>
    </location>
</feature>
<feature type="domain" description="Fibronectin type-III 4" evidence="5">
    <location>
        <begin position="913"/>
        <end position="1002"/>
    </location>
</feature>
<feature type="domain" description="Fibronectin type-III 5" evidence="5">
    <location>
        <begin position="1003"/>
        <end position="1091"/>
    </location>
</feature>
<feature type="domain" description="Fibronectin type-III 6" evidence="5">
    <location>
        <begin position="1093"/>
        <end position="1179"/>
    </location>
</feature>
<feature type="domain" description="Fibronectin type-III 7" evidence="5">
    <location>
        <begin position="1180"/>
        <end position="1274"/>
    </location>
</feature>
<feature type="domain" description="Fibronectin type-III 8" evidence="5">
    <location>
        <begin position="1275"/>
        <end position="1363"/>
    </location>
</feature>
<feature type="domain" description="Fibronectin type-III 8; extra domain B" evidence="5 6 7">
    <location>
        <begin position="1275"/>
        <end position="1363"/>
    </location>
</feature>
<feature type="domain" description="Fibronectin type-III 9" evidence="5">
    <location>
        <begin position="1364"/>
        <end position="1456"/>
    </location>
</feature>
<feature type="domain" description="Fibronectin type-III 10" evidence="5">
    <location>
        <begin position="1457"/>
        <end position="1544"/>
    </location>
</feature>
<feature type="domain" description="Fibronectin type-III 11" evidence="5">
    <location>
        <begin position="1545"/>
        <end position="1638"/>
    </location>
</feature>
<feature type="domain" description="Fibronectin type-III 12" evidence="5">
    <location>
        <begin position="1639"/>
        <end position="1730"/>
    </location>
</feature>
<feature type="domain" description="Fibronectin type-III 13" evidence="5">
    <location>
        <begin position="1731"/>
        <end position="1818"/>
    </location>
</feature>
<feature type="domain" description="Fibronectin type-III 13; extra domain A" evidence="5">
    <location>
        <begin position="1731"/>
        <end position="1818"/>
    </location>
</feature>
<feature type="domain" description="Fibronectin type-III 14" evidence="5">
    <location>
        <begin position="1819"/>
        <end position="1912"/>
    </location>
</feature>
<feature type="domain" description="Fibronectin type-III 15" evidence="5">
    <location>
        <begin position="1913"/>
        <end position="2000"/>
    </location>
</feature>
<feature type="domain" description="Fibronectin type-III 16" evidence="5">
    <location>
        <begin position="2001"/>
        <end position="2092"/>
    </location>
</feature>
<feature type="domain" description="Fibronectin type-III 17" evidence="5">
    <location>
        <begin position="2200"/>
        <end position="2292"/>
    </location>
</feature>
<feature type="domain" description="Fibronectin type-I 10" evidence="6">
    <location>
        <begin position="2300"/>
        <end position="2344"/>
    </location>
</feature>
<feature type="domain" description="Fibronectin type-I 11" evidence="6">
    <location>
        <begin position="2345"/>
        <end position="2387"/>
    </location>
</feature>
<feature type="domain" description="Fibronectin type-I 12" evidence="6">
    <location>
        <begin position="2389"/>
        <end position="2429"/>
    </location>
</feature>
<feature type="DNA-binding region" evidence="2">
    <location>
        <begin position="911"/>
        <end position="1176"/>
    </location>
</feature>
<feature type="region of interest" description="Disordered" evidence="9">
    <location>
        <begin position="21"/>
        <end position="50"/>
    </location>
</feature>
<feature type="region of interest" description="Fibrin- and heparin-binding 1" evidence="2">
    <location>
        <begin position="54"/>
        <end position="274"/>
    </location>
</feature>
<feature type="region of interest" description="Collagen-binding" evidence="2">
    <location>
        <begin position="313"/>
        <end position="613"/>
    </location>
</feature>
<feature type="region of interest" description="Cell-attachment" evidence="2">
    <location>
        <begin position="1362"/>
        <end position="1635"/>
    </location>
</feature>
<feature type="region of interest" description="Heparin-binding 2" evidence="2">
    <location>
        <begin position="1816"/>
        <end position="2087"/>
    </location>
</feature>
<feature type="region of interest" description="V region (type III connecting segment, IIICS)" evidence="2">
    <location>
        <begin position="2088"/>
        <end position="2207"/>
    </location>
</feature>
<feature type="region of interest" description="Fibrin-binding 2" evidence="2">
    <location>
        <begin position="2302"/>
        <end position="2433"/>
    </location>
</feature>
<feature type="short sequence motif" description="Cell attachment site" evidence="2">
    <location>
        <begin position="1619"/>
        <end position="1621"/>
    </location>
</feature>
<feature type="compositionally biased region" description="Polar residues" evidence="9">
    <location>
        <begin position="36"/>
        <end position="50"/>
    </location>
</feature>
<feature type="glycosylation site" description="N-linked (GlcNAc...) asparagine" evidence="8">
    <location>
        <position position="435"/>
    </location>
</feature>
<feature type="glycosylation site" description="N-linked (GlcNAc...) asparagine" evidence="8">
    <location>
        <position position="533"/>
    </location>
</feature>
<feature type="glycosylation site" description="N-linked (GlcNAc...) asparagine" evidence="8">
    <location>
        <position position="547"/>
    </location>
</feature>
<feature type="glycosylation site" description="N-linked (GlcNAc...) asparagine" evidence="8">
    <location>
        <position position="881"/>
    </location>
</feature>
<feature type="glycosylation site" description="N-linked (GlcNAc...) asparagine" evidence="8">
    <location>
        <position position="1011"/>
    </location>
</feature>
<feature type="glycosylation site" description="N-linked (GlcNAc...) asparagine" evidence="8">
    <location>
        <position position="1248"/>
    </location>
</feature>
<feature type="glycosylation site" description="N-linked (GlcNAc...) asparagine" evidence="8">
    <location>
        <position position="1295"/>
    </location>
</feature>
<feature type="glycosylation site" description="N-linked (GlcNAc...) asparagine" evidence="8">
    <location>
        <position position="2204"/>
    </location>
</feature>
<feature type="disulfide bond" evidence="6">
    <location>
        <begin position="54"/>
        <end position="80"/>
    </location>
</feature>
<feature type="disulfide bond" evidence="6">
    <location>
        <begin position="78"/>
        <end position="89"/>
    </location>
</feature>
<feature type="disulfide bond" evidence="6">
    <location>
        <begin position="99"/>
        <end position="127"/>
    </location>
</feature>
<feature type="disulfide bond" evidence="6">
    <location>
        <begin position="125"/>
        <end position="137"/>
    </location>
</feature>
<feature type="disulfide bond" evidence="6">
    <location>
        <begin position="143"/>
        <end position="171"/>
    </location>
</feature>
<feature type="disulfide bond" evidence="6">
    <location>
        <begin position="169"/>
        <end position="181"/>
    </location>
</feature>
<feature type="disulfide bond" evidence="6">
    <location>
        <begin position="188"/>
        <end position="217"/>
    </location>
</feature>
<feature type="disulfide bond" evidence="6">
    <location>
        <begin position="215"/>
        <end position="227"/>
    </location>
</feature>
<feature type="disulfide bond" evidence="6">
    <location>
        <begin position="233"/>
        <end position="262"/>
    </location>
</feature>
<feature type="disulfide bond" evidence="6">
    <location>
        <begin position="260"/>
        <end position="272"/>
    </location>
</feature>
<feature type="disulfide bond" evidence="6">
    <location>
        <begin position="313"/>
        <end position="340"/>
    </location>
</feature>
<feature type="disulfide bond" evidence="6">
    <location>
        <begin position="338"/>
        <end position="347"/>
    </location>
</feature>
<feature type="disulfide bond" evidence="7">
    <location>
        <begin position="365"/>
        <end position="391"/>
    </location>
</feature>
<feature type="disulfide bond" evidence="7">
    <location>
        <begin position="379"/>
        <end position="406"/>
    </location>
</feature>
<feature type="disulfide bond" evidence="7">
    <location>
        <begin position="425"/>
        <end position="451"/>
    </location>
</feature>
<feature type="disulfide bond" evidence="7">
    <location>
        <begin position="439"/>
        <end position="466"/>
    </location>
</feature>
<feature type="disulfide bond" evidence="6">
    <location>
        <begin position="475"/>
        <end position="503"/>
    </location>
</feature>
<feature type="disulfide bond" evidence="6">
    <location>
        <begin position="501"/>
        <end position="513"/>
    </location>
</feature>
<feature type="disulfide bond" evidence="6">
    <location>
        <begin position="523"/>
        <end position="550"/>
    </location>
</feature>
<feature type="disulfide bond" evidence="6">
    <location>
        <begin position="548"/>
        <end position="560"/>
    </location>
</feature>
<feature type="disulfide bond" evidence="6">
    <location>
        <begin position="566"/>
        <end position="594"/>
    </location>
</feature>
<feature type="disulfide bond" evidence="6">
    <location>
        <begin position="592"/>
        <end position="604"/>
    </location>
</feature>
<feature type="disulfide bond" evidence="6">
    <location>
        <begin position="2302"/>
        <end position="2331"/>
    </location>
</feature>
<feature type="disulfide bond" evidence="6">
    <location>
        <begin position="2329"/>
        <end position="2341"/>
    </location>
</feature>
<feature type="disulfide bond" evidence="6">
    <location>
        <begin position="2347"/>
        <end position="2374"/>
    </location>
</feature>
<feature type="disulfide bond" evidence="6">
    <location>
        <begin position="2372"/>
        <end position="2384"/>
    </location>
</feature>
<feature type="disulfide bond" evidence="6">
    <location>
        <begin position="2391"/>
        <end position="2417"/>
    </location>
</feature>
<feature type="disulfide bond" evidence="6">
    <location>
        <begin position="2415"/>
        <end position="2426"/>
    </location>
</feature>
<feature type="sequence conflict" description="In Ref. 2; CAA23714." evidence="10" ref="2">
    <original>V</original>
    <variation>L</variation>
    <location>
        <position position="563"/>
    </location>
</feature>
<feature type="sequence conflict" description="In Ref. 5; AAA48772." evidence="10" ref="5">
    <original>R</original>
    <variation>K</variation>
    <location>
        <position position="1529"/>
    </location>
</feature>
<feature type="sequence conflict" description="In Ref. 5; AAA48772." evidence="10" ref="5">
    <original>T</original>
    <variation>N</variation>
    <location>
        <position position="1610"/>
    </location>
</feature>
<feature type="sequence conflict" description="In Ref. 5; CAA29781/AAA48772." evidence="10" ref="5">
    <original>Q</original>
    <variation>P</variation>
    <location>
        <position position="1642"/>
    </location>
</feature>
<feature type="sequence conflict" description="In Ref. 5; AAA48772/CAA29781." evidence="10" ref="5">
    <original>EGLQ</original>
    <variation>QGLE</variation>
    <location>
        <begin position="1695"/>
        <end position="1698"/>
    </location>
</feature>
<feature type="sequence conflict" description="In Ref. 6; AAA73566." evidence="10" ref="6">
    <original>MS</original>
    <variation>ID</variation>
    <location>
        <begin position="2370"/>
        <end position="2371"/>
    </location>
</feature>
<dbReference type="EMBL" id="AADN05000347">
    <property type="status" value="NOT_ANNOTATED_CDS"/>
    <property type="molecule type" value="Genomic_DNA"/>
</dbReference>
<dbReference type="EMBL" id="V00432">
    <property type="protein sequence ID" value="CAA23714.1"/>
    <property type="molecule type" value="Genomic_DNA"/>
</dbReference>
<dbReference type="EMBL" id="U21327">
    <property type="protein sequence ID" value="AAA73566.1"/>
    <property type="molecule type" value="mRNA"/>
</dbReference>
<dbReference type="EMBL" id="X06533">
    <property type="protein sequence ID" value="CAA29781.1"/>
    <property type="molecule type" value="Genomic_DNA"/>
</dbReference>
<dbReference type="EMBL" id="M26186">
    <property type="protein sequence ID" value="AAA48772.1"/>
    <property type="molecule type" value="Genomic_DNA"/>
</dbReference>
<dbReference type="EMBL" id="U20386">
    <property type="protein sequence ID" value="AAB01062.1"/>
    <property type="molecule type" value="mRNA"/>
</dbReference>
<dbReference type="PIR" id="A28512">
    <property type="entry name" value="A28512"/>
</dbReference>
<dbReference type="PIR" id="A29355">
    <property type="entry name" value="A29355"/>
</dbReference>
<dbReference type="PIR" id="S71465">
    <property type="entry name" value="S71465mgcds"/>
</dbReference>
<dbReference type="RefSeq" id="NP_001185641.1">
    <molecule id="P11722-1"/>
    <property type="nucleotide sequence ID" value="NM_001198712.2"/>
</dbReference>
<dbReference type="SMR" id="P11722"/>
<dbReference type="FunCoup" id="P11722">
    <property type="interactions" value="1660"/>
</dbReference>
<dbReference type="STRING" id="9031.ENSGALP00000005653"/>
<dbReference type="GlyCosmos" id="P11722">
    <property type="glycosylation" value="8 sites, No reported glycans"/>
</dbReference>
<dbReference type="GlyGen" id="P11722">
    <property type="glycosylation" value="11 sites"/>
</dbReference>
<dbReference type="Ensembl" id="ENSGALT00010028696.1">
    <molecule id="P11722-1"/>
    <property type="protein sequence ID" value="ENSGALP00010016500.1"/>
    <property type="gene ID" value="ENSGALG00010011984.1"/>
</dbReference>
<dbReference type="GeneID" id="396133"/>
<dbReference type="KEGG" id="gga:396133"/>
<dbReference type="CTD" id="2335"/>
<dbReference type="VEuPathDB" id="HostDB:geneid_396133"/>
<dbReference type="GeneTree" id="ENSGT00940000155126"/>
<dbReference type="HOGENOM" id="CLU_000916_0_0_1"/>
<dbReference type="InParanoid" id="P11722"/>
<dbReference type="OMA" id="GHCITDS"/>
<dbReference type="OrthoDB" id="261433at2759"/>
<dbReference type="PhylomeDB" id="P11722"/>
<dbReference type="TreeFam" id="TF329915"/>
<dbReference type="Reactome" id="R-GGA-114608">
    <property type="pathway name" value="Platelet degranulation"/>
</dbReference>
<dbReference type="Reactome" id="R-GGA-1474228">
    <property type="pathway name" value="Degradation of the extracellular matrix"/>
</dbReference>
<dbReference type="Reactome" id="R-GGA-1566977">
    <property type="pathway name" value="Fibronectin matrix formation"/>
</dbReference>
<dbReference type="Reactome" id="R-GGA-2129379">
    <property type="pathway name" value="Molecules associated with elastic fibres"/>
</dbReference>
<dbReference type="Reactome" id="R-GGA-216083">
    <property type="pathway name" value="Integrin cell surface interactions"/>
</dbReference>
<dbReference type="Reactome" id="R-GGA-3000170">
    <property type="pathway name" value="Syndecan interactions"/>
</dbReference>
<dbReference type="Reactome" id="R-GGA-3000178">
    <property type="pathway name" value="ECM proteoglycans"/>
</dbReference>
<dbReference type="Reactome" id="R-GGA-354192">
    <property type="pathway name" value="Integrin signaling"/>
</dbReference>
<dbReference type="Reactome" id="R-GGA-354194">
    <property type="pathway name" value="GRB2:SOS provides linkage to MAPK signaling for Integrins"/>
</dbReference>
<dbReference type="Reactome" id="R-GGA-372708">
    <property type="pathway name" value="p130Cas linkage to MAPK signaling for integrins"/>
</dbReference>
<dbReference type="Reactome" id="R-GGA-381426">
    <property type="pathway name" value="Regulation of Insulin-like Growth Factor (IGF) transport and uptake by Insulin-like Growth Factor Binding Proteins (IGFBPs)"/>
</dbReference>
<dbReference type="Reactome" id="R-GGA-5674135">
    <property type="pathway name" value="MAP2K and MAPK activation"/>
</dbReference>
<dbReference type="Reactome" id="R-GGA-8874081">
    <property type="pathway name" value="MET activates PTK2 signaling"/>
</dbReference>
<dbReference type="Reactome" id="R-GGA-8957275">
    <property type="pathway name" value="Post-translational protein phosphorylation"/>
</dbReference>
<dbReference type="Reactome" id="R-GGA-9860927">
    <property type="pathway name" value="Turbulent (oscillatory, disturbed) flow shear stress activates signaling by PIEZO1 and integrins in endothelial cells"/>
</dbReference>
<dbReference type="PRO" id="PR:P11722"/>
<dbReference type="Proteomes" id="UP000000539">
    <property type="component" value="Chromosome 7"/>
</dbReference>
<dbReference type="Bgee" id="ENSGALG00000003578">
    <property type="expression patterns" value="Expressed in granulocyte and 12 other cell types or tissues"/>
</dbReference>
<dbReference type="GO" id="GO:0016324">
    <property type="term" value="C:apical plasma membrane"/>
    <property type="evidence" value="ECO:0007669"/>
    <property type="project" value="Ensembl"/>
</dbReference>
<dbReference type="GO" id="GO:0045178">
    <property type="term" value="C:basal part of cell"/>
    <property type="evidence" value="ECO:0000314"/>
    <property type="project" value="AgBase"/>
</dbReference>
<dbReference type="GO" id="GO:0005604">
    <property type="term" value="C:basement membrane"/>
    <property type="evidence" value="ECO:0000314"/>
    <property type="project" value="AgBase"/>
</dbReference>
<dbReference type="GO" id="GO:0009986">
    <property type="term" value="C:cell surface"/>
    <property type="evidence" value="ECO:0000314"/>
    <property type="project" value="AgBase"/>
</dbReference>
<dbReference type="GO" id="GO:0062023">
    <property type="term" value="C:collagen-containing extracellular matrix"/>
    <property type="evidence" value="ECO:0000314"/>
    <property type="project" value="AgBase"/>
</dbReference>
<dbReference type="GO" id="GO:0005737">
    <property type="term" value="C:cytoplasm"/>
    <property type="evidence" value="ECO:0000314"/>
    <property type="project" value="AgBase"/>
</dbReference>
<dbReference type="GO" id="GO:0005793">
    <property type="term" value="C:endoplasmic reticulum-Golgi intermediate compartment"/>
    <property type="evidence" value="ECO:0007669"/>
    <property type="project" value="Ensembl"/>
</dbReference>
<dbReference type="GO" id="GO:0070062">
    <property type="term" value="C:extracellular exosome"/>
    <property type="evidence" value="ECO:0007669"/>
    <property type="project" value="Ensembl"/>
</dbReference>
<dbReference type="GO" id="GO:0031012">
    <property type="term" value="C:extracellular matrix"/>
    <property type="evidence" value="ECO:0000304"/>
    <property type="project" value="AgBase"/>
</dbReference>
<dbReference type="GO" id="GO:0005615">
    <property type="term" value="C:extracellular space"/>
    <property type="evidence" value="ECO:0000314"/>
    <property type="project" value="AgBase"/>
</dbReference>
<dbReference type="GO" id="GO:0005577">
    <property type="term" value="C:fibrinogen complex"/>
    <property type="evidence" value="ECO:0007669"/>
    <property type="project" value="Ensembl"/>
</dbReference>
<dbReference type="GO" id="GO:0005614">
    <property type="term" value="C:interstitial matrix"/>
    <property type="evidence" value="ECO:0000314"/>
    <property type="project" value="AgBase"/>
</dbReference>
<dbReference type="GO" id="GO:0048471">
    <property type="term" value="C:perinuclear region of cytoplasm"/>
    <property type="evidence" value="ECO:0000314"/>
    <property type="project" value="AgBase"/>
</dbReference>
<dbReference type="GO" id="GO:0005886">
    <property type="term" value="C:plasma membrane"/>
    <property type="evidence" value="ECO:0000314"/>
    <property type="project" value="AgBase"/>
</dbReference>
<dbReference type="GO" id="GO:0099512">
    <property type="term" value="C:supramolecular fiber"/>
    <property type="evidence" value="ECO:0000314"/>
    <property type="project" value="AgBase"/>
</dbReference>
<dbReference type="GO" id="GO:0003677">
    <property type="term" value="F:DNA binding"/>
    <property type="evidence" value="ECO:0007669"/>
    <property type="project" value="UniProtKB-KW"/>
</dbReference>
<dbReference type="GO" id="GO:0008201">
    <property type="term" value="F:heparin binding"/>
    <property type="evidence" value="ECO:0007669"/>
    <property type="project" value="UniProtKB-KW"/>
</dbReference>
<dbReference type="GO" id="GO:0042802">
    <property type="term" value="F:identical protein binding"/>
    <property type="evidence" value="ECO:0007669"/>
    <property type="project" value="Ensembl"/>
</dbReference>
<dbReference type="GO" id="GO:0005178">
    <property type="term" value="F:integrin binding"/>
    <property type="evidence" value="ECO:0000318"/>
    <property type="project" value="GO_Central"/>
</dbReference>
<dbReference type="GO" id="GO:0016504">
    <property type="term" value="F:peptidase activator activity"/>
    <property type="evidence" value="ECO:0007669"/>
    <property type="project" value="Ensembl"/>
</dbReference>
<dbReference type="GO" id="GO:0002020">
    <property type="term" value="F:protease binding"/>
    <property type="evidence" value="ECO:0007669"/>
    <property type="project" value="Ensembl"/>
</dbReference>
<dbReference type="GO" id="GO:0043394">
    <property type="term" value="F:proteoglycan binding"/>
    <property type="evidence" value="ECO:0000318"/>
    <property type="project" value="GO_Central"/>
</dbReference>
<dbReference type="GO" id="GO:0048018">
    <property type="term" value="F:receptor ligand activity"/>
    <property type="evidence" value="ECO:0007669"/>
    <property type="project" value="Ensembl"/>
</dbReference>
<dbReference type="GO" id="GO:0006953">
    <property type="term" value="P:acute-phase response"/>
    <property type="evidence" value="ECO:0007669"/>
    <property type="project" value="UniProtKB-KW"/>
</dbReference>
<dbReference type="GO" id="GO:0045176">
    <property type="term" value="P:apical protein localization"/>
    <property type="evidence" value="ECO:0000314"/>
    <property type="project" value="AgBase"/>
</dbReference>
<dbReference type="GO" id="GO:0090245">
    <property type="term" value="P:axis elongation involved in somitogenesis"/>
    <property type="evidence" value="ECO:0000314"/>
    <property type="project" value="AgBase"/>
</dbReference>
<dbReference type="GO" id="GO:0051702">
    <property type="term" value="P:biological process involved in interaction with symbiont"/>
    <property type="evidence" value="ECO:0007669"/>
    <property type="project" value="Ensembl"/>
</dbReference>
<dbReference type="GO" id="GO:0007161">
    <property type="term" value="P:calcium-independent cell-matrix adhesion"/>
    <property type="evidence" value="ECO:0007669"/>
    <property type="project" value="Ensembl"/>
</dbReference>
<dbReference type="GO" id="GO:0007155">
    <property type="term" value="P:cell adhesion"/>
    <property type="evidence" value="ECO:0000314"/>
    <property type="project" value="AgBase"/>
</dbReference>
<dbReference type="GO" id="GO:0016477">
    <property type="term" value="P:cell migration"/>
    <property type="evidence" value="ECO:0000304"/>
    <property type="project" value="AgBase"/>
</dbReference>
<dbReference type="GO" id="GO:0060974">
    <property type="term" value="P:cell migration involved in heart formation"/>
    <property type="evidence" value="ECO:0000315"/>
    <property type="project" value="AgBase"/>
</dbReference>
<dbReference type="GO" id="GO:0008283">
    <property type="term" value="P:cell population proliferation"/>
    <property type="evidence" value="ECO:0000314"/>
    <property type="project" value="WormBase"/>
</dbReference>
<dbReference type="GO" id="GO:0007160">
    <property type="term" value="P:cell-matrix adhesion"/>
    <property type="evidence" value="ECO:0000318"/>
    <property type="project" value="GO_Central"/>
</dbReference>
<dbReference type="GO" id="GO:0031589">
    <property type="term" value="P:cell-substrate adhesion"/>
    <property type="evidence" value="ECO:0000315"/>
    <property type="project" value="AgBase"/>
</dbReference>
<dbReference type="GO" id="GO:0007044">
    <property type="term" value="P:cell-substrate junction assembly"/>
    <property type="evidence" value="ECO:0000318"/>
    <property type="project" value="GO_Central"/>
</dbReference>
<dbReference type="GO" id="GO:0035987">
    <property type="term" value="P:endodermal cell differentiation"/>
    <property type="evidence" value="ECO:0007669"/>
    <property type="project" value="Ensembl"/>
</dbReference>
<dbReference type="GO" id="GO:0043542">
    <property type="term" value="P:endothelial cell migration"/>
    <property type="evidence" value="ECO:0007669"/>
    <property type="project" value="Ensembl"/>
</dbReference>
<dbReference type="GO" id="GO:0048041">
    <property type="term" value="P:focal adhesion assembly"/>
    <property type="evidence" value="ECO:0000314"/>
    <property type="project" value="AgBase"/>
</dbReference>
<dbReference type="GO" id="GO:0007507">
    <property type="term" value="P:heart development"/>
    <property type="evidence" value="ECO:0000318"/>
    <property type="project" value="GO_Central"/>
</dbReference>
<dbReference type="GO" id="GO:0033622">
    <property type="term" value="P:integrin activation"/>
    <property type="evidence" value="ECO:0007669"/>
    <property type="project" value="Ensembl"/>
</dbReference>
<dbReference type="GO" id="GO:0007229">
    <property type="term" value="P:integrin-mediated signaling pathway"/>
    <property type="evidence" value="ECO:0007669"/>
    <property type="project" value="Ensembl"/>
</dbReference>
<dbReference type="GO" id="GO:0150102">
    <property type="term" value="P:negative regulation of monocyte activation"/>
    <property type="evidence" value="ECO:0007669"/>
    <property type="project" value="Ensembl"/>
</dbReference>
<dbReference type="GO" id="GO:0071635">
    <property type="term" value="P:negative regulation of transforming growth factor beta production"/>
    <property type="evidence" value="ECO:0007669"/>
    <property type="project" value="Ensembl"/>
</dbReference>
<dbReference type="GO" id="GO:0007399">
    <property type="term" value="P:nervous system development"/>
    <property type="evidence" value="ECO:0000318"/>
    <property type="project" value="GO_Central"/>
</dbReference>
<dbReference type="GO" id="GO:1901166">
    <property type="term" value="P:neural crest cell migration involved in autonomic nervous system development"/>
    <property type="evidence" value="ECO:0007669"/>
    <property type="project" value="Ensembl"/>
</dbReference>
<dbReference type="GO" id="GO:0045773">
    <property type="term" value="P:positive regulation of axon extension"/>
    <property type="evidence" value="ECO:0007669"/>
    <property type="project" value="Ensembl"/>
</dbReference>
<dbReference type="GO" id="GO:0048146">
    <property type="term" value="P:positive regulation of fibroblast proliferation"/>
    <property type="evidence" value="ECO:0007669"/>
    <property type="project" value="Ensembl"/>
</dbReference>
<dbReference type="GO" id="GO:0010628">
    <property type="term" value="P:positive regulation of gene expression"/>
    <property type="evidence" value="ECO:0007669"/>
    <property type="project" value="Ensembl"/>
</dbReference>
<dbReference type="GO" id="GO:0051897">
    <property type="term" value="P:positive regulation of phosphatidylinositol 3-kinase/protein kinase B signal transduction"/>
    <property type="evidence" value="ECO:0007669"/>
    <property type="project" value="Ensembl"/>
</dbReference>
<dbReference type="GO" id="GO:1904237">
    <property type="term" value="P:positive regulation of substrate-dependent cell migration, cell attachment to substrate"/>
    <property type="evidence" value="ECO:0007669"/>
    <property type="project" value="Ensembl"/>
</dbReference>
<dbReference type="GO" id="GO:0008360">
    <property type="term" value="P:regulation of cell shape"/>
    <property type="evidence" value="ECO:0007669"/>
    <property type="project" value="UniProtKB-KW"/>
</dbReference>
<dbReference type="GO" id="GO:0070372">
    <property type="term" value="P:regulation of ERK1 and ERK2 cascade"/>
    <property type="evidence" value="ECO:0007669"/>
    <property type="project" value="Ensembl"/>
</dbReference>
<dbReference type="GO" id="GO:0014850">
    <property type="term" value="P:response to muscle activity"/>
    <property type="evidence" value="ECO:0007669"/>
    <property type="project" value="Ensembl"/>
</dbReference>
<dbReference type="GO" id="GO:0034446">
    <property type="term" value="P:substrate adhesion-dependent cell spreading"/>
    <property type="evidence" value="ECO:0007669"/>
    <property type="project" value="Ensembl"/>
</dbReference>
<dbReference type="GO" id="GO:0006929">
    <property type="term" value="P:substrate-dependent cell migration"/>
    <property type="evidence" value="ECO:0000315"/>
    <property type="project" value="AgBase"/>
</dbReference>
<dbReference type="GO" id="GO:0042060">
    <property type="term" value="P:wound healing"/>
    <property type="evidence" value="ECO:0007669"/>
    <property type="project" value="Ensembl"/>
</dbReference>
<dbReference type="CDD" id="cd00061">
    <property type="entry name" value="FN1"/>
    <property type="match status" value="12"/>
</dbReference>
<dbReference type="CDD" id="cd00062">
    <property type="entry name" value="FN2"/>
    <property type="match status" value="2"/>
</dbReference>
<dbReference type="CDD" id="cd00063">
    <property type="entry name" value="FN3"/>
    <property type="match status" value="17"/>
</dbReference>
<dbReference type="FunFam" id="2.10.70.10:FF:000004">
    <property type="entry name" value="Fibronectin 1"/>
    <property type="match status" value="1"/>
</dbReference>
<dbReference type="FunFam" id="2.10.70.10:FF:000006">
    <property type="entry name" value="Fibronectin 1"/>
    <property type="match status" value="3"/>
</dbReference>
<dbReference type="FunFam" id="2.10.70.10:FF:000007">
    <property type="entry name" value="Fibronectin 1"/>
    <property type="match status" value="2"/>
</dbReference>
<dbReference type="FunFam" id="2.10.70.10:FF:000018">
    <property type="entry name" value="Fibronectin 1"/>
    <property type="match status" value="1"/>
</dbReference>
<dbReference type="FunFam" id="2.60.40.10:FF:000099">
    <property type="entry name" value="Fibronectin 1"/>
    <property type="match status" value="2"/>
</dbReference>
<dbReference type="FunFam" id="2.60.40.10:FF:000417">
    <property type="entry name" value="Fibronectin 1"/>
    <property type="match status" value="1"/>
</dbReference>
<dbReference type="FunFam" id="2.60.40.10:FF:000579">
    <property type="entry name" value="Fibronectin 1"/>
    <property type="match status" value="1"/>
</dbReference>
<dbReference type="FunFam" id="2.60.40.10:FF:000622">
    <property type="entry name" value="Fibronectin 1"/>
    <property type="match status" value="1"/>
</dbReference>
<dbReference type="FunFam" id="2.60.40.10:FF:001069">
    <property type="entry name" value="Fibronectin 1"/>
    <property type="match status" value="1"/>
</dbReference>
<dbReference type="FunFam" id="2.10.10.10:FF:000001">
    <property type="entry name" value="Fibronectin 1a isoform 1"/>
    <property type="match status" value="2"/>
</dbReference>
<dbReference type="FunFam" id="2.60.40.10:FF:000227">
    <property type="entry name" value="Fibronectin isoform X1"/>
    <property type="match status" value="1"/>
</dbReference>
<dbReference type="FunFam" id="2.10.70.10:FF:000020">
    <property type="entry name" value="fibronectin isoform X1"/>
    <property type="match status" value="1"/>
</dbReference>
<dbReference type="FunFam" id="2.10.70.10:FF:000021">
    <property type="entry name" value="fibronectin isoform X1"/>
    <property type="match status" value="1"/>
</dbReference>
<dbReference type="FunFam" id="2.10.70.10:FF:000022">
    <property type="entry name" value="fibronectin isoform X1"/>
    <property type="match status" value="1"/>
</dbReference>
<dbReference type="FunFam" id="2.60.40.10:FF:000275">
    <property type="entry name" value="fibronectin isoform X1"/>
    <property type="match status" value="1"/>
</dbReference>
<dbReference type="FunFam" id="2.60.40.10:FF:000300">
    <property type="entry name" value="fibronectin isoform X1"/>
    <property type="match status" value="1"/>
</dbReference>
<dbReference type="FunFam" id="2.60.40.10:FF:000306">
    <property type="entry name" value="fibronectin isoform X1"/>
    <property type="match status" value="1"/>
</dbReference>
<dbReference type="FunFam" id="2.60.40.10:FF:000317">
    <property type="entry name" value="fibronectin isoform X1"/>
    <property type="match status" value="1"/>
</dbReference>
<dbReference type="FunFam" id="2.60.40.10:FF:000336">
    <property type="entry name" value="fibronectin isoform X1"/>
    <property type="match status" value="1"/>
</dbReference>
<dbReference type="FunFam" id="2.60.40.10:FF:000364">
    <property type="entry name" value="fibronectin isoform X1"/>
    <property type="match status" value="1"/>
</dbReference>
<dbReference type="FunFam" id="2.60.40.10:FF:000382">
    <property type="entry name" value="fibronectin isoform X1"/>
    <property type="match status" value="1"/>
</dbReference>
<dbReference type="FunFam" id="2.60.40.10:FF:000447">
    <property type="entry name" value="fibronectin isoform X1"/>
    <property type="match status" value="1"/>
</dbReference>
<dbReference type="FunFam" id="2.60.40.10:FF:000433">
    <property type="entry name" value="fibronectin isoform X5"/>
    <property type="match status" value="1"/>
</dbReference>
<dbReference type="FunFam" id="2.60.40.10:FF:000701">
    <property type="entry name" value="Tenascin-X"/>
    <property type="match status" value="1"/>
</dbReference>
<dbReference type="Gene3D" id="2.10.70.10">
    <property type="entry name" value="Complement Module, domain 1"/>
    <property type="match status" value="12"/>
</dbReference>
<dbReference type="Gene3D" id="2.10.10.10">
    <property type="entry name" value="Fibronectin, type II, collagen-binding"/>
    <property type="match status" value="2"/>
</dbReference>
<dbReference type="Gene3D" id="2.60.40.10">
    <property type="entry name" value="Immunoglobulins"/>
    <property type="match status" value="17"/>
</dbReference>
<dbReference type="InterPro" id="IPR050991">
    <property type="entry name" value="ECM_Regulatory_Proteins"/>
</dbReference>
<dbReference type="InterPro" id="IPR000083">
    <property type="entry name" value="Fibronectin_type1"/>
</dbReference>
<dbReference type="InterPro" id="IPR003961">
    <property type="entry name" value="FN3_dom"/>
</dbReference>
<dbReference type="InterPro" id="IPR036116">
    <property type="entry name" value="FN3_sf"/>
</dbReference>
<dbReference type="InterPro" id="IPR000562">
    <property type="entry name" value="FN_type2_dom"/>
</dbReference>
<dbReference type="InterPro" id="IPR036943">
    <property type="entry name" value="FN_type2_sf"/>
</dbReference>
<dbReference type="InterPro" id="IPR013783">
    <property type="entry name" value="Ig-like_fold"/>
</dbReference>
<dbReference type="InterPro" id="IPR013806">
    <property type="entry name" value="Kringle-like"/>
</dbReference>
<dbReference type="PANTHER" id="PTHR46708:SF8">
    <property type="entry name" value="FIBRONECTIN"/>
    <property type="match status" value="1"/>
</dbReference>
<dbReference type="PANTHER" id="PTHR46708">
    <property type="entry name" value="TENASCIN"/>
    <property type="match status" value="1"/>
</dbReference>
<dbReference type="Pfam" id="PF00039">
    <property type="entry name" value="fn1"/>
    <property type="match status" value="11"/>
</dbReference>
<dbReference type="Pfam" id="PF00040">
    <property type="entry name" value="fn2"/>
    <property type="match status" value="2"/>
</dbReference>
<dbReference type="Pfam" id="PF00041">
    <property type="entry name" value="fn3"/>
    <property type="match status" value="17"/>
</dbReference>
<dbReference type="PRINTS" id="PR00013">
    <property type="entry name" value="FNTYPEII"/>
</dbReference>
<dbReference type="SMART" id="SM00058">
    <property type="entry name" value="FN1"/>
    <property type="match status" value="12"/>
</dbReference>
<dbReference type="SMART" id="SM00059">
    <property type="entry name" value="FN2"/>
    <property type="match status" value="2"/>
</dbReference>
<dbReference type="SMART" id="SM00060">
    <property type="entry name" value="FN3"/>
    <property type="match status" value="17"/>
</dbReference>
<dbReference type="SUPFAM" id="SSF49265">
    <property type="entry name" value="Fibronectin type III"/>
    <property type="match status" value="10"/>
</dbReference>
<dbReference type="SUPFAM" id="SSF57603">
    <property type="entry name" value="FnI-like domain"/>
    <property type="match status" value="12"/>
</dbReference>
<dbReference type="SUPFAM" id="SSF57440">
    <property type="entry name" value="Kringle-like"/>
    <property type="match status" value="2"/>
</dbReference>
<dbReference type="PROSITE" id="PS00022">
    <property type="entry name" value="EGF_1"/>
    <property type="match status" value="2"/>
</dbReference>
<dbReference type="PROSITE" id="PS01253">
    <property type="entry name" value="FN1_1"/>
    <property type="match status" value="12"/>
</dbReference>
<dbReference type="PROSITE" id="PS51091">
    <property type="entry name" value="FN1_2"/>
    <property type="match status" value="12"/>
</dbReference>
<dbReference type="PROSITE" id="PS00023">
    <property type="entry name" value="FN2_1"/>
    <property type="match status" value="2"/>
</dbReference>
<dbReference type="PROSITE" id="PS51092">
    <property type="entry name" value="FN2_2"/>
    <property type="match status" value="2"/>
</dbReference>
<dbReference type="PROSITE" id="PS50853">
    <property type="entry name" value="FN3"/>
    <property type="match status" value="17"/>
</dbReference>
<accession>P11722</accession>
<accession>F1NJT3</accession>
<accession>Q90921</accession>
<comment type="function">
    <text evidence="2 3">Fibronectins bind cell surfaces and various compounds including collagen, fibrin, heparin, DNA, and actin. Fibronectins are involved in cell adhesion, cell motility, opsonization, wound healing, and maintenance of cell shape (By similarity). Involved in osteoblast compaction through the fibronectin fibrillogenesis cell-mediated matrix assembly process, essential for osteoblast mineralization. Participates in the regulation of type I collagen deposition by osteoblasts (By similarity).</text>
</comment>
<comment type="subunit">
    <text evidence="1">Mostly heterodimers or multimers of alternatively spliced variants, connected by 2 disulfide bonds near the carboxyl ends; to a lesser extent homodimers. Interacts with FBLN7 (By similarity).</text>
</comment>
<comment type="subcellular location">
    <subcellularLocation>
        <location>Secreted</location>
        <location>Extracellular space</location>
        <location>Extracellular matrix</location>
    </subcellularLocation>
</comment>
<comment type="alternative products">
    <event type="alternative splicing"/>
    <isoform>
        <id>P11722-1</id>
        <name>1</name>
        <sequence type="displayed"/>
    </isoform>
    <text evidence="10">A number of isoforms are produced. The diversity of isoforms depends on the V region and either of the two extra domain which can be either included or excluded (partially or completely for the V region).</text>
</comment>
<comment type="tissue specificity">
    <text>Plasma FN (soluble dimeric form) is secreted by hepatocytes. Cellular FN (dimeric or cross-linked multimeric forms), made by fibroblasts, epithelial and other cell types, is deposited as fibrils in the extracellular matrix.</text>
</comment>
<comment type="PTM">
    <text evidence="1">Sulfated.</text>
</comment>
<comment type="PTM">
    <text evidence="3">Forms covalent cross-links mediated by a transglutaminase, such as F13A or TGM2, between a glutamine and the epsilon-amino group of a lysine residue, forming homopolymers and heteropolymers (e.g. fibrinogen-fibronectin, collagen-fibronectin heteropolymers).</text>
</comment>
<reference key="1">
    <citation type="journal article" date="2004" name="Nature">
        <title>Sequence and comparative analysis of the chicken genome provide unique perspectives on vertebrate evolution.</title>
        <authorList>
            <person name="Hillier L.W."/>
            <person name="Miller W."/>
            <person name="Birney E."/>
            <person name="Warren W."/>
            <person name="Hardison R.C."/>
            <person name="Ponting C.P."/>
            <person name="Bork P."/>
            <person name="Burt D.W."/>
            <person name="Groenen M.A.M."/>
            <person name="Delany M.E."/>
            <person name="Dodgson J.B."/>
            <person name="Chinwalla A.T."/>
            <person name="Cliften P.F."/>
            <person name="Clifton S.W."/>
            <person name="Delehaunty K.D."/>
            <person name="Fronick C."/>
            <person name="Fulton R.S."/>
            <person name="Graves T.A."/>
            <person name="Kremitzki C."/>
            <person name="Layman D."/>
            <person name="Magrini V."/>
            <person name="McPherson J.D."/>
            <person name="Miner T.L."/>
            <person name="Minx P."/>
            <person name="Nash W.E."/>
            <person name="Nhan M.N."/>
            <person name="Nelson J.O."/>
            <person name="Oddy L.G."/>
            <person name="Pohl C.S."/>
            <person name="Randall-Maher J."/>
            <person name="Smith S.M."/>
            <person name="Wallis J.W."/>
            <person name="Yang S.-P."/>
            <person name="Romanov M.N."/>
            <person name="Rondelli C.M."/>
            <person name="Paton B."/>
            <person name="Smith J."/>
            <person name="Morrice D."/>
            <person name="Daniels L."/>
            <person name="Tempest H.G."/>
            <person name="Robertson L."/>
            <person name="Masabanda J.S."/>
            <person name="Griffin D.K."/>
            <person name="Vignal A."/>
            <person name="Fillon V."/>
            <person name="Jacobbson L."/>
            <person name="Kerje S."/>
            <person name="Andersson L."/>
            <person name="Crooijmans R.P."/>
            <person name="Aerts J."/>
            <person name="van der Poel J.J."/>
            <person name="Ellegren H."/>
            <person name="Caldwell R.B."/>
            <person name="Hubbard S.J."/>
            <person name="Grafham D.V."/>
            <person name="Kierzek A.M."/>
            <person name="McLaren S.R."/>
            <person name="Overton I.M."/>
            <person name="Arakawa H."/>
            <person name="Beattie K.J."/>
            <person name="Bezzubov Y."/>
            <person name="Boardman P.E."/>
            <person name="Bonfield J.K."/>
            <person name="Croning M.D.R."/>
            <person name="Davies R.M."/>
            <person name="Francis M.D."/>
            <person name="Humphray S.J."/>
            <person name="Scott C.E."/>
            <person name="Taylor R.G."/>
            <person name="Tickle C."/>
            <person name="Brown W.R.A."/>
            <person name="Rogers J."/>
            <person name="Buerstedde J.-M."/>
            <person name="Wilson S.A."/>
            <person name="Stubbs L."/>
            <person name="Ovcharenko I."/>
            <person name="Gordon L."/>
            <person name="Lucas S."/>
            <person name="Miller M.M."/>
            <person name="Inoko H."/>
            <person name="Shiina T."/>
            <person name="Kaufman J."/>
            <person name="Salomonsen J."/>
            <person name="Skjoedt K."/>
            <person name="Wong G.K.-S."/>
            <person name="Wang J."/>
            <person name="Liu B."/>
            <person name="Wang J."/>
            <person name="Yu J."/>
            <person name="Yang H."/>
            <person name="Nefedov M."/>
            <person name="Koriabine M."/>
            <person name="Dejong P.J."/>
            <person name="Goodstadt L."/>
            <person name="Webber C."/>
            <person name="Dickens N.J."/>
            <person name="Letunic I."/>
            <person name="Suyama M."/>
            <person name="Torrents D."/>
            <person name="von Mering C."/>
            <person name="Zdobnov E.M."/>
            <person name="Makova K."/>
            <person name="Nekrutenko A."/>
            <person name="Elnitski L."/>
            <person name="Eswara P."/>
            <person name="King D.C."/>
            <person name="Yang S.-P."/>
            <person name="Tyekucheva S."/>
            <person name="Radakrishnan A."/>
            <person name="Harris R.S."/>
            <person name="Chiaromonte F."/>
            <person name="Taylor J."/>
            <person name="He J."/>
            <person name="Rijnkels M."/>
            <person name="Griffiths-Jones S."/>
            <person name="Ureta-Vidal A."/>
            <person name="Hoffman M.M."/>
            <person name="Severin J."/>
            <person name="Searle S.M.J."/>
            <person name="Law A.S."/>
            <person name="Speed D."/>
            <person name="Waddington D."/>
            <person name="Cheng Z."/>
            <person name="Tuzun E."/>
            <person name="Eichler E."/>
            <person name="Bao Z."/>
            <person name="Flicek P."/>
            <person name="Shteynberg D.D."/>
            <person name="Brent M.R."/>
            <person name="Bye J.M."/>
            <person name="Huckle E.J."/>
            <person name="Chatterji S."/>
            <person name="Dewey C."/>
            <person name="Pachter L."/>
            <person name="Kouranov A."/>
            <person name="Mourelatos Z."/>
            <person name="Hatzigeorgiou A.G."/>
            <person name="Paterson A.H."/>
            <person name="Ivarie R."/>
            <person name="Brandstrom M."/>
            <person name="Axelsson E."/>
            <person name="Backstrom N."/>
            <person name="Berlin S."/>
            <person name="Webster M.T."/>
            <person name="Pourquie O."/>
            <person name="Reymond A."/>
            <person name="Ucla C."/>
            <person name="Antonarakis S.E."/>
            <person name="Long M."/>
            <person name="Emerson J.J."/>
            <person name="Betran E."/>
            <person name="Dupanloup I."/>
            <person name="Kaessmann H."/>
            <person name="Hinrichs A.S."/>
            <person name="Bejerano G."/>
            <person name="Furey T.S."/>
            <person name="Harte R.A."/>
            <person name="Raney B."/>
            <person name="Siepel A."/>
            <person name="Kent W.J."/>
            <person name="Haussler D."/>
            <person name="Eyras E."/>
            <person name="Castelo R."/>
            <person name="Abril J.F."/>
            <person name="Castellano S."/>
            <person name="Camara F."/>
            <person name="Parra G."/>
            <person name="Guigo R."/>
            <person name="Bourque G."/>
            <person name="Tesler G."/>
            <person name="Pevzner P.A."/>
            <person name="Smit A."/>
            <person name="Fulton L.A."/>
            <person name="Mardis E.R."/>
            <person name="Wilson R.K."/>
        </authorList>
    </citation>
    <scope>NUCLEOTIDE SEQUENCE [LARGE SCALE GENOMIC DNA]</scope>
    <source>
        <strain>Red jungle fowl</strain>
    </source>
</reference>
<reference key="2">
    <citation type="journal article" date="1983" name="Proc. Natl. Acad. Sci. U.S.A.">
        <title>Isolation of genomic DNA clones spanning the entire fibronectin gene.</title>
        <authorList>
            <person name="Hirano H."/>
            <person name="Yamada Y."/>
            <person name="Sullivan M."/>
            <person name="de Crombrugghe B."/>
            <person name="Pastan I."/>
            <person name="Yamada K.M."/>
        </authorList>
    </citation>
    <scope>NUCLEOTIDE SEQUENCE [GENOMIC DNA] OF 562-611</scope>
</reference>
<reference key="3">
    <citation type="submission" date="1995-02" db="EMBL/GenBank/DDBJ databases">
        <authorList>
            <person name="Norton P.A."/>
        </authorList>
    </citation>
    <scope>NUCLEOTIDE SEQUENCE [MRNA] OF 1177-2382</scope>
    <source>
        <strain>White leghorn</strain>
    </source>
</reference>
<reference key="4">
    <citation type="journal article" date="1996" name="Biochim. Biophys. Acta">
        <title>The exon encoding the fibronectin type III-9 repeat is constitutively included in the mRNA from chick limb mesenchyme and cartilage.</title>
        <authorList>
            <person name="Gehris A.L."/>
            <person name="Brandli D.W."/>
            <person name="Lewis S.D."/>
            <person name="Bennett V.D."/>
        </authorList>
    </citation>
    <scope>NUCLEOTIDE SEQUENCE [MRNA] OF 1353-1541</scope>
</reference>
<reference key="5">
    <citation type="journal article" date="1987" name="Biochim. Biophys. Acta">
        <title>Genetic analysis of the cell binding domain region of the chicken fibronectin gene.</title>
        <authorList>
            <person name="Kubomura S."/>
            <person name="Obara M."/>
            <person name="Karasaki Y."/>
            <person name="Taniguchi H."/>
            <person name="Gotoh S."/>
            <person name="Tsuda T."/>
            <person name="Higashi K."/>
            <person name="Ohsato K."/>
            <person name="Hiarno H."/>
        </authorList>
    </citation>
    <scope>NUCLEOTIDE SEQUENCE [GENOMIC DNA] OF 1453-1725</scope>
</reference>
<reference key="6">
    <citation type="journal article" date="1987" name="Mol. Cell. Biol.">
        <title>Alternative splicing of chicken fibronectin in embryos and in normal and transformed cells.</title>
        <authorList>
            <person name="Norton P.A."/>
            <person name="Hynes R.O."/>
        </authorList>
    </citation>
    <scope>NUCLEOTIDE SEQUENCE [MRNA] OF 1177-2382</scope>
</reference>
<organism>
    <name type="scientific">Gallus gallus</name>
    <name type="common">Chicken</name>
    <dbReference type="NCBI Taxonomy" id="9031"/>
    <lineage>
        <taxon>Eukaryota</taxon>
        <taxon>Metazoa</taxon>
        <taxon>Chordata</taxon>
        <taxon>Craniata</taxon>
        <taxon>Vertebrata</taxon>
        <taxon>Euteleostomi</taxon>
        <taxon>Archelosauria</taxon>
        <taxon>Archosauria</taxon>
        <taxon>Dinosauria</taxon>
        <taxon>Saurischia</taxon>
        <taxon>Theropoda</taxon>
        <taxon>Coelurosauria</taxon>
        <taxon>Aves</taxon>
        <taxon>Neognathae</taxon>
        <taxon>Galloanserae</taxon>
        <taxon>Galliformes</taxon>
        <taxon>Phasianidae</taxon>
        <taxon>Phasianinae</taxon>
        <taxon>Gallus</taxon>
    </lineage>
</organism>
<gene>
    <name evidence="2" type="primary">FN1</name>
</gene>